<organism>
    <name type="scientific">Salmonella typhimurium (strain LT2 / SGSC1412 / ATCC 700720)</name>
    <dbReference type="NCBI Taxonomy" id="99287"/>
    <lineage>
        <taxon>Bacteria</taxon>
        <taxon>Pseudomonadati</taxon>
        <taxon>Pseudomonadota</taxon>
        <taxon>Gammaproteobacteria</taxon>
        <taxon>Enterobacterales</taxon>
        <taxon>Enterobacteriaceae</taxon>
        <taxon>Salmonella</taxon>
    </lineage>
</organism>
<evidence type="ECO:0000255" key="1">
    <source>
        <dbReference type="HAMAP-Rule" id="MF_01858"/>
    </source>
</evidence>
<accession>Q8ZQ73</accession>
<feature type="chain" id="PRO_0000366817" description="Ribosomal RNA large subunit methyltransferase K/L">
    <location>
        <begin position="1"/>
        <end position="702"/>
    </location>
</feature>
<feature type="domain" description="THUMP" evidence="1">
    <location>
        <begin position="43"/>
        <end position="154"/>
    </location>
</feature>
<sequence length="702" mass="78849">MNSLFASTARGLEELLKTELEKLGAVGCQVVQGGVHFQGDTRLIYQSLMWSRLASRIILPMGECKVYSDLDLYLGVQAINWTEIFNPGATFAVHFSGLNDTIRNSQYGAMKVKDAIVDAFTRKNLPRPNVDRESPDLRINVWLNKETASIALDLSGDGLHLRGYRDRTGLAPIKETLAAAIVMRSGWQPGTPLLDPMCGSGTLLIEAAMWATDRAPGLHRGHWGFSGWAQHDETIWQEVKAEAQTRARKGLAEYSSHFYGSDSDARVIERARSNARRAGIGELITFEVKDVAQLSNPLPKGPYGTVISNPPYGERLDSEPALIALHSLLGRTMKNQFGGWNLSLFSASPDLLGSLQLRADKQFKAKNGPLDCVQKNYHIAETTADSKPATVAEDYANRLRKNLKKLEKWARQEGIECYRLYDADLPEYNVAVDRYGDWAVIQEYAPPKTVDAQKARQRLFDIIAATLSVLGIPPNKLVLKTRERQKGKNQYQKMSEKGEFLEVSEYNARLWVNLTDYLDTGLFLDHRIARRMLGEMSKGKDFLNLFSYTGSASVHAGLGGARSTTTVDMSRTYLEWAERNLRLNGLSGRAHRLIQADCLGWLREANEQFDLIFIDPPTFSNSKRMEESFDVQRDHVALMKDLKRLLRKGGTIMFSNNKRGFRMDLEGLAELGLTAQEITQKTLSPDFARNRQIHNCWLIRAA</sequence>
<gene>
    <name evidence="1" type="primary">rlmL</name>
    <name type="ordered locus">STM1061</name>
</gene>
<dbReference type="EC" id="2.1.1.173" evidence="1"/>
<dbReference type="EC" id="2.1.1.264" evidence="1"/>
<dbReference type="EMBL" id="AE006468">
    <property type="protein sequence ID" value="AAL19994.1"/>
    <property type="molecule type" value="Genomic_DNA"/>
</dbReference>
<dbReference type="SMR" id="Q8ZQ73"/>
<dbReference type="STRING" id="99287.STM1061"/>
<dbReference type="PaxDb" id="99287-STM1061"/>
<dbReference type="KEGG" id="stm:STM1061"/>
<dbReference type="PATRIC" id="fig|99287.12.peg.1125"/>
<dbReference type="HOGENOM" id="CLU_014042_2_0_6"/>
<dbReference type="OMA" id="TYLNWAE"/>
<dbReference type="PhylomeDB" id="Q8ZQ73"/>
<dbReference type="BioCyc" id="SENT99287:STM1061-MONOMER"/>
<dbReference type="Proteomes" id="UP000001014">
    <property type="component" value="Chromosome"/>
</dbReference>
<dbReference type="GO" id="GO:0005737">
    <property type="term" value="C:cytoplasm"/>
    <property type="evidence" value="ECO:0007669"/>
    <property type="project" value="UniProtKB-SubCell"/>
</dbReference>
<dbReference type="GO" id="GO:0052915">
    <property type="term" value="F:23S rRNA (guanine(2445)-N(2))-methyltransferase activity"/>
    <property type="evidence" value="ECO:0007669"/>
    <property type="project" value="UniProtKB-UniRule"/>
</dbReference>
<dbReference type="GO" id="GO:0003723">
    <property type="term" value="F:RNA binding"/>
    <property type="evidence" value="ECO:0007669"/>
    <property type="project" value="UniProtKB-KW"/>
</dbReference>
<dbReference type="GO" id="GO:0008990">
    <property type="term" value="F:rRNA (guanine-N2-)-methyltransferase activity"/>
    <property type="evidence" value="ECO:0000318"/>
    <property type="project" value="GO_Central"/>
</dbReference>
<dbReference type="GO" id="GO:0070043">
    <property type="term" value="F:rRNA (guanine-N7-)-methyltransferase activity"/>
    <property type="evidence" value="ECO:0000318"/>
    <property type="project" value="GO_Central"/>
</dbReference>
<dbReference type="CDD" id="cd02440">
    <property type="entry name" value="AdoMet_MTases"/>
    <property type="match status" value="2"/>
</dbReference>
<dbReference type="CDD" id="cd11715">
    <property type="entry name" value="THUMP_AdoMetMT"/>
    <property type="match status" value="1"/>
</dbReference>
<dbReference type="FunFam" id="3.30.750.80:FF:000001">
    <property type="entry name" value="Ribosomal RNA large subunit methyltransferase K/L"/>
    <property type="match status" value="1"/>
</dbReference>
<dbReference type="FunFam" id="3.40.50.150:FF:000039">
    <property type="entry name" value="Ribosomal RNA large subunit methyltransferase K/L"/>
    <property type="match status" value="1"/>
</dbReference>
<dbReference type="Gene3D" id="3.30.2130.30">
    <property type="match status" value="1"/>
</dbReference>
<dbReference type="Gene3D" id="3.30.750.80">
    <property type="entry name" value="RNA methyltransferase domain (HRMD) like"/>
    <property type="match status" value="1"/>
</dbReference>
<dbReference type="Gene3D" id="3.40.50.150">
    <property type="entry name" value="Vaccinia Virus protein VP39"/>
    <property type="match status" value="2"/>
</dbReference>
<dbReference type="HAMAP" id="MF_01858">
    <property type="entry name" value="23SrRNA_methyltr_KL"/>
    <property type="match status" value="1"/>
</dbReference>
<dbReference type="InterPro" id="IPR017244">
    <property type="entry name" value="23SrRNA_methyltr_KL"/>
</dbReference>
<dbReference type="InterPro" id="IPR002052">
    <property type="entry name" value="DNA_methylase_N6_adenine_CS"/>
</dbReference>
<dbReference type="InterPro" id="IPR000241">
    <property type="entry name" value="RlmKL-like_Mtase"/>
</dbReference>
<dbReference type="InterPro" id="IPR053943">
    <property type="entry name" value="RlmKL-like_Mtase_CS"/>
</dbReference>
<dbReference type="InterPro" id="IPR054170">
    <property type="entry name" value="RlmL_1st"/>
</dbReference>
<dbReference type="InterPro" id="IPR019614">
    <property type="entry name" value="SAM-dep_methyl-trfase"/>
</dbReference>
<dbReference type="InterPro" id="IPR029063">
    <property type="entry name" value="SAM-dependent_MTases_sf"/>
</dbReference>
<dbReference type="InterPro" id="IPR004114">
    <property type="entry name" value="THUMP_dom"/>
</dbReference>
<dbReference type="NCBIfam" id="NF008748">
    <property type="entry name" value="PRK11783.1"/>
    <property type="match status" value="1"/>
</dbReference>
<dbReference type="PANTHER" id="PTHR47313">
    <property type="entry name" value="RIBOSOMAL RNA LARGE SUBUNIT METHYLTRANSFERASE K/L"/>
    <property type="match status" value="1"/>
</dbReference>
<dbReference type="PANTHER" id="PTHR47313:SF1">
    <property type="entry name" value="RIBOSOMAL RNA LARGE SUBUNIT METHYLTRANSFERASE K_L"/>
    <property type="match status" value="1"/>
</dbReference>
<dbReference type="Pfam" id="PF10672">
    <property type="entry name" value="Methyltrans_SAM"/>
    <property type="match status" value="1"/>
</dbReference>
<dbReference type="Pfam" id="PF22020">
    <property type="entry name" value="RlmL_1st"/>
    <property type="match status" value="1"/>
</dbReference>
<dbReference type="Pfam" id="PF02926">
    <property type="entry name" value="THUMP"/>
    <property type="match status" value="1"/>
</dbReference>
<dbReference type="Pfam" id="PF01170">
    <property type="entry name" value="UPF0020"/>
    <property type="match status" value="1"/>
</dbReference>
<dbReference type="PIRSF" id="PIRSF037618">
    <property type="entry name" value="RNA_Mtase_bacteria_prd"/>
    <property type="match status" value="1"/>
</dbReference>
<dbReference type="PRINTS" id="PR00507">
    <property type="entry name" value="N12N6MTFRASE"/>
</dbReference>
<dbReference type="SMART" id="SM00981">
    <property type="entry name" value="THUMP"/>
    <property type="match status" value="1"/>
</dbReference>
<dbReference type="SUPFAM" id="SSF53335">
    <property type="entry name" value="S-adenosyl-L-methionine-dependent methyltransferases"/>
    <property type="match status" value="2"/>
</dbReference>
<dbReference type="PROSITE" id="PS51165">
    <property type="entry name" value="THUMP"/>
    <property type="match status" value="1"/>
</dbReference>
<dbReference type="PROSITE" id="PS01261">
    <property type="entry name" value="UPF0020"/>
    <property type="match status" value="1"/>
</dbReference>
<reference key="1">
    <citation type="journal article" date="2001" name="Nature">
        <title>Complete genome sequence of Salmonella enterica serovar Typhimurium LT2.</title>
        <authorList>
            <person name="McClelland M."/>
            <person name="Sanderson K.E."/>
            <person name="Spieth J."/>
            <person name="Clifton S.W."/>
            <person name="Latreille P."/>
            <person name="Courtney L."/>
            <person name="Porwollik S."/>
            <person name="Ali J."/>
            <person name="Dante M."/>
            <person name="Du F."/>
            <person name="Hou S."/>
            <person name="Layman D."/>
            <person name="Leonard S."/>
            <person name="Nguyen C."/>
            <person name="Scott K."/>
            <person name="Holmes A."/>
            <person name="Grewal N."/>
            <person name="Mulvaney E."/>
            <person name="Ryan E."/>
            <person name="Sun H."/>
            <person name="Florea L."/>
            <person name="Miller W."/>
            <person name="Stoneking T."/>
            <person name="Nhan M."/>
            <person name="Waterston R."/>
            <person name="Wilson R.K."/>
        </authorList>
    </citation>
    <scope>NUCLEOTIDE SEQUENCE [LARGE SCALE GENOMIC DNA]</scope>
    <source>
        <strain>LT2 / SGSC1412 / ATCC 700720</strain>
    </source>
</reference>
<name>RLMKL_SALTY</name>
<proteinExistence type="inferred from homology"/>
<keyword id="KW-0963">Cytoplasm</keyword>
<keyword id="KW-0489">Methyltransferase</keyword>
<keyword id="KW-1185">Reference proteome</keyword>
<keyword id="KW-0694">RNA-binding</keyword>
<keyword id="KW-0698">rRNA processing</keyword>
<keyword id="KW-0949">S-adenosyl-L-methionine</keyword>
<keyword id="KW-0808">Transferase</keyword>
<protein>
    <recommendedName>
        <fullName evidence="1">Ribosomal RNA large subunit methyltransferase K/L</fullName>
    </recommendedName>
    <domain>
        <recommendedName>
            <fullName evidence="1">23S rRNA m2G2445 methyltransferase</fullName>
            <ecNumber evidence="1">2.1.1.173</ecNumber>
        </recommendedName>
        <alternativeName>
            <fullName evidence="1">rRNA (guanine-N(2)-)-methyltransferase RlmL</fullName>
        </alternativeName>
    </domain>
    <domain>
        <recommendedName>
            <fullName evidence="1">23S rRNA m7G2069 methyltransferase</fullName>
            <ecNumber evidence="1">2.1.1.264</ecNumber>
        </recommendedName>
        <alternativeName>
            <fullName evidence="1">rRNA (guanine-N(7)-)-methyltransferase RlmK</fullName>
        </alternativeName>
    </domain>
</protein>
<comment type="function">
    <text evidence="1">Specifically methylates the guanine in position 2445 (m2G2445) and the guanine in position 2069 (m7G2069) of 23S rRNA.</text>
</comment>
<comment type="catalytic activity">
    <reaction evidence="1">
        <text>guanosine(2445) in 23S rRNA + S-adenosyl-L-methionine = N(2)-methylguanosine(2445) in 23S rRNA + S-adenosyl-L-homocysteine + H(+)</text>
        <dbReference type="Rhea" id="RHEA:42740"/>
        <dbReference type="Rhea" id="RHEA-COMP:10215"/>
        <dbReference type="Rhea" id="RHEA-COMP:10216"/>
        <dbReference type="ChEBI" id="CHEBI:15378"/>
        <dbReference type="ChEBI" id="CHEBI:57856"/>
        <dbReference type="ChEBI" id="CHEBI:59789"/>
        <dbReference type="ChEBI" id="CHEBI:74269"/>
        <dbReference type="ChEBI" id="CHEBI:74481"/>
        <dbReference type="EC" id="2.1.1.173"/>
    </reaction>
</comment>
<comment type="catalytic activity">
    <reaction evidence="1">
        <text>guanosine(2069) in 23S rRNA + S-adenosyl-L-methionine = N(2)-methylguanosine(2069) in 23S rRNA + S-adenosyl-L-homocysteine + H(+)</text>
        <dbReference type="Rhea" id="RHEA:43772"/>
        <dbReference type="Rhea" id="RHEA-COMP:10688"/>
        <dbReference type="Rhea" id="RHEA-COMP:10689"/>
        <dbReference type="ChEBI" id="CHEBI:15378"/>
        <dbReference type="ChEBI" id="CHEBI:57856"/>
        <dbReference type="ChEBI" id="CHEBI:59789"/>
        <dbReference type="ChEBI" id="CHEBI:74269"/>
        <dbReference type="ChEBI" id="CHEBI:74481"/>
        <dbReference type="EC" id="2.1.1.264"/>
    </reaction>
</comment>
<comment type="subcellular location">
    <subcellularLocation>
        <location evidence="1">Cytoplasm</location>
    </subcellularLocation>
</comment>
<comment type="similarity">
    <text evidence="1">Belongs to the methyltransferase superfamily. RlmKL family.</text>
</comment>